<dbReference type="EMBL" id="CP000416">
    <property type="protein sequence ID" value="ABJ63793.1"/>
    <property type="molecule type" value="Genomic_DNA"/>
</dbReference>
<dbReference type="RefSeq" id="WP_011667425.1">
    <property type="nucleotide sequence ID" value="NC_008497.1"/>
</dbReference>
<dbReference type="SMR" id="Q03SM9"/>
<dbReference type="STRING" id="387344.LVIS_0648"/>
<dbReference type="GeneID" id="56992465"/>
<dbReference type="KEGG" id="lbr:LVIS_0648"/>
<dbReference type="eggNOG" id="COG0556">
    <property type="taxonomic scope" value="Bacteria"/>
</dbReference>
<dbReference type="HOGENOM" id="CLU_009621_2_1_9"/>
<dbReference type="Proteomes" id="UP000001652">
    <property type="component" value="Chromosome"/>
</dbReference>
<dbReference type="GO" id="GO:0005737">
    <property type="term" value="C:cytoplasm"/>
    <property type="evidence" value="ECO:0007669"/>
    <property type="project" value="UniProtKB-SubCell"/>
</dbReference>
<dbReference type="GO" id="GO:0009380">
    <property type="term" value="C:excinuclease repair complex"/>
    <property type="evidence" value="ECO:0007669"/>
    <property type="project" value="InterPro"/>
</dbReference>
<dbReference type="GO" id="GO:0005524">
    <property type="term" value="F:ATP binding"/>
    <property type="evidence" value="ECO:0007669"/>
    <property type="project" value="UniProtKB-UniRule"/>
</dbReference>
<dbReference type="GO" id="GO:0016887">
    <property type="term" value="F:ATP hydrolysis activity"/>
    <property type="evidence" value="ECO:0007669"/>
    <property type="project" value="InterPro"/>
</dbReference>
<dbReference type="GO" id="GO:0003677">
    <property type="term" value="F:DNA binding"/>
    <property type="evidence" value="ECO:0007669"/>
    <property type="project" value="UniProtKB-UniRule"/>
</dbReference>
<dbReference type="GO" id="GO:0009381">
    <property type="term" value="F:excinuclease ABC activity"/>
    <property type="evidence" value="ECO:0007669"/>
    <property type="project" value="UniProtKB-UniRule"/>
</dbReference>
<dbReference type="GO" id="GO:0004386">
    <property type="term" value="F:helicase activity"/>
    <property type="evidence" value="ECO:0007669"/>
    <property type="project" value="UniProtKB-KW"/>
</dbReference>
<dbReference type="GO" id="GO:0006289">
    <property type="term" value="P:nucleotide-excision repair"/>
    <property type="evidence" value="ECO:0007669"/>
    <property type="project" value="UniProtKB-UniRule"/>
</dbReference>
<dbReference type="GO" id="GO:0009432">
    <property type="term" value="P:SOS response"/>
    <property type="evidence" value="ECO:0007669"/>
    <property type="project" value="UniProtKB-UniRule"/>
</dbReference>
<dbReference type="CDD" id="cd17916">
    <property type="entry name" value="DEXHc_UvrB"/>
    <property type="match status" value="1"/>
</dbReference>
<dbReference type="CDD" id="cd18790">
    <property type="entry name" value="SF2_C_UvrB"/>
    <property type="match status" value="1"/>
</dbReference>
<dbReference type="Gene3D" id="3.40.50.300">
    <property type="entry name" value="P-loop containing nucleotide triphosphate hydrolases"/>
    <property type="match status" value="3"/>
</dbReference>
<dbReference type="Gene3D" id="4.10.860.10">
    <property type="entry name" value="UVR domain"/>
    <property type="match status" value="1"/>
</dbReference>
<dbReference type="HAMAP" id="MF_00204">
    <property type="entry name" value="UvrB"/>
    <property type="match status" value="1"/>
</dbReference>
<dbReference type="InterPro" id="IPR006935">
    <property type="entry name" value="Helicase/UvrB_N"/>
</dbReference>
<dbReference type="InterPro" id="IPR014001">
    <property type="entry name" value="Helicase_ATP-bd"/>
</dbReference>
<dbReference type="InterPro" id="IPR001650">
    <property type="entry name" value="Helicase_C-like"/>
</dbReference>
<dbReference type="InterPro" id="IPR027417">
    <property type="entry name" value="P-loop_NTPase"/>
</dbReference>
<dbReference type="InterPro" id="IPR001943">
    <property type="entry name" value="UVR_dom"/>
</dbReference>
<dbReference type="InterPro" id="IPR036876">
    <property type="entry name" value="UVR_dom_sf"/>
</dbReference>
<dbReference type="InterPro" id="IPR004807">
    <property type="entry name" value="UvrB"/>
</dbReference>
<dbReference type="InterPro" id="IPR041471">
    <property type="entry name" value="UvrB_inter"/>
</dbReference>
<dbReference type="InterPro" id="IPR024759">
    <property type="entry name" value="UvrB_YAD/RRR_dom"/>
</dbReference>
<dbReference type="NCBIfam" id="NF003673">
    <property type="entry name" value="PRK05298.1"/>
    <property type="match status" value="1"/>
</dbReference>
<dbReference type="NCBIfam" id="TIGR00631">
    <property type="entry name" value="uvrb"/>
    <property type="match status" value="1"/>
</dbReference>
<dbReference type="PANTHER" id="PTHR24029">
    <property type="entry name" value="UVRABC SYSTEM PROTEIN B"/>
    <property type="match status" value="1"/>
</dbReference>
<dbReference type="PANTHER" id="PTHR24029:SF0">
    <property type="entry name" value="UVRABC SYSTEM PROTEIN B"/>
    <property type="match status" value="1"/>
</dbReference>
<dbReference type="Pfam" id="PF00271">
    <property type="entry name" value="Helicase_C"/>
    <property type="match status" value="1"/>
</dbReference>
<dbReference type="Pfam" id="PF04851">
    <property type="entry name" value="ResIII"/>
    <property type="match status" value="1"/>
</dbReference>
<dbReference type="Pfam" id="PF02151">
    <property type="entry name" value="UVR"/>
    <property type="match status" value="1"/>
</dbReference>
<dbReference type="Pfam" id="PF12344">
    <property type="entry name" value="UvrB"/>
    <property type="match status" value="1"/>
</dbReference>
<dbReference type="Pfam" id="PF17757">
    <property type="entry name" value="UvrB_inter"/>
    <property type="match status" value="1"/>
</dbReference>
<dbReference type="SMART" id="SM00487">
    <property type="entry name" value="DEXDc"/>
    <property type="match status" value="1"/>
</dbReference>
<dbReference type="SMART" id="SM00490">
    <property type="entry name" value="HELICc"/>
    <property type="match status" value="1"/>
</dbReference>
<dbReference type="SUPFAM" id="SSF46600">
    <property type="entry name" value="C-terminal UvrC-binding domain of UvrB"/>
    <property type="match status" value="1"/>
</dbReference>
<dbReference type="SUPFAM" id="SSF52540">
    <property type="entry name" value="P-loop containing nucleoside triphosphate hydrolases"/>
    <property type="match status" value="2"/>
</dbReference>
<dbReference type="PROSITE" id="PS51192">
    <property type="entry name" value="HELICASE_ATP_BIND_1"/>
    <property type="match status" value="1"/>
</dbReference>
<dbReference type="PROSITE" id="PS51194">
    <property type="entry name" value="HELICASE_CTER"/>
    <property type="match status" value="1"/>
</dbReference>
<dbReference type="PROSITE" id="PS50151">
    <property type="entry name" value="UVR"/>
    <property type="match status" value="1"/>
</dbReference>
<sequence>MIDRQTDRAFDLVSKYQPTGDQPEAINQLTHGIEAGEKAQILLGATGTGKTFTISNVIKNVNKPTLVLSHNKTLAGQLYGEFKQFFPNNAVEYFVSYYDYYQPEAYVPSSDTYIEKDSSINDEIDKLRHSATSSLLERNDVIVVASVSSIFGLGDPTEYKNHVVSLRVGQEIERDALLRKLVNIQFERNDYDFQRGRFRVHGDVVEIFPASRDERALRVEFFGDEIDRIREVDALTGEIVGDREHVAIFPATHFMTNDDIMAQATAGIEGELKERLAELENDGKLLEAQRLKQRTTYDLEMMREMGYTSGIENYSRWMDGRQAGEPPYTLLDFFPKDFLLVVDESHVTMPQVRGMYNGDRARKQQLVDYGFRLPSALDNRPLKLNEVEQHINQVIYMSATPGPYEAEQTDHVVQQIIRPTGLLDPTIDVRPIMGQMDDLVGEINQRIEKNERTFVTTLTKKMAEDLTDYLKDLGIKVAYLHSDIKTLERTEIMRDLRLGKYDVLVGINLLREGIDIPEVSLVAILDADKEGFLRNERSLIQTIGRAARNSHGSVIMYADSVTDSMQAAMDETARRRQIQIAYNKEHGITPTTIIKPIRDLIAVSKKNDNAGEKDDFVASDFEDMTKEDQEKLIARLEDEMRAAAKKLDFEQAASLRDTIMDMKTEIGD</sequence>
<keyword id="KW-0067">ATP-binding</keyword>
<keyword id="KW-0963">Cytoplasm</keyword>
<keyword id="KW-0227">DNA damage</keyword>
<keyword id="KW-0228">DNA excision</keyword>
<keyword id="KW-0234">DNA repair</keyword>
<keyword id="KW-0267">Excision nuclease</keyword>
<keyword id="KW-0347">Helicase</keyword>
<keyword id="KW-0378">Hydrolase</keyword>
<keyword id="KW-0547">Nucleotide-binding</keyword>
<keyword id="KW-1185">Reference proteome</keyword>
<keyword id="KW-0742">SOS response</keyword>
<organism>
    <name type="scientific">Levilactobacillus brevis (strain ATCC 367 / BCRC 12310 / CIP 105137 / JCM 1170 / LMG 11437 / NCIMB 947 / NCTC 947)</name>
    <name type="common">Lactobacillus brevis</name>
    <dbReference type="NCBI Taxonomy" id="387344"/>
    <lineage>
        <taxon>Bacteria</taxon>
        <taxon>Bacillati</taxon>
        <taxon>Bacillota</taxon>
        <taxon>Bacilli</taxon>
        <taxon>Lactobacillales</taxon>
        <taxon>Lactobacillaceae</taxon>
        <taxon>Levilactobacillus</taxon>
    </lineage>
</organism>
<name>UVRB_LEVBA</name>
<accession>Q03SM9</accession>
<proteinExistence type="inferred from homology"/>
<gene>
    <name evidence="1" type="primary">uvrB</name>
    <name type="ordered locus">LVIS_0648</name>
</gene>
<feature type="chain" id="PRO_1000077896" description="UvrABC system protein B">
    <location>
        <begin position="1"/>
        <end position="668"/>
    </location>
</feature>
<feature type="domain" description="Helicase ATP-binding" evidence="1">
    <location>
        <begin position="31"/>
        <end position="188"/>
    </location>
</feature>
<feature type="domain" description="Helicase C-terminal" evidence="1">
    <location>
        <begin position="435"/>
        <end position="601"/>
    </location>
</feature>
<feature type="domain" description="UVR" evidence="1">
    <location>
        <begin position="630"/>
        <end position="665"/>
    </location>
</feature>
<feature type="short sequence motif" description="Beta-hairpin">
    <location>
        <begin position="97"/>
        <end position="120"/>
    </location>
</feature>
<feature type="binding site" evidence="1">
    <location>
        <begin position="44"/>
        <end position="51"/>
    </location>
    <ligand>
        <name>ATP</name>
        <dbReference type="ChEBI" id="CHEBI:30616"/>
    </ligand>
</feature>
<comment type="function">
    <text evidence="1">The UvrABC repair system catalyzes the recognition and processing of DNA lesions. A damage recognition complex composed of 2 UvrA and 2 UvrB subunits scans DNA for abnormalities. Upon binding of the UvrA(2)B(2) complex to a putative damaged site, the DNA wraps around one UvrB monomer. DNA wrap is dependent on ATP binding by UvrB and probably causes local melting of the DNA helix, facilitating insertion of UvrB beta-hairpin between the DNA strands. Then UvrB probes one DNA strand for the presence of a lesion. If a lesion is found the UvrA subunits dissociate and the UvrB-DNA preincision complex is formed. This complex is subsequently bound by UvrC and the second UvrB is released. If no lesion is found, the DNA wraps around the other UvrB subunit that will check the other stand for damage.</text>
</comment>
<comment type="subunit">
    <text evidence="1">Forms a heterotetramer with UvrA during the search for lesions. Interacts with UvrC in an incision complex.</text>
</comment>
<comment type="subcellular location">
    <subcellularLocation>
        <location evidence="1">Cytoplasm</location>
    </subcellularLocation>
</comment>
<comment type="domain">
    <text evidence="1">The beta-hairpin motif is involved in DNA binding.</text>
</comment>
<comment type="similarity">
    <text evidence="1">Belongs to the UvrB family.</text>
</comment>
<reference key="1">
    <citation type="journal article" date="2006" name="Proc. Natl. Acad. Sci. U.S.A.">
        <title>Comparative genomics of the lactic acid bacteria.</title>
        <authorList>
            <person name="Makarova K.S."/>
            <person name="Slesarev A."/>
            <person name="Wolf Y.I."/>
            <person name="Sorokin A."/>
            <person name="Mirkin B."/>
            <person name="Koonin E.V."/>
            <person name="Pavlov A."/>
            <person name="Pavlova N."/>
            <person name="Karamychev V."/>
            <person name="Polouchine N."/>
            <person name="Shakhova V."/>
            <person name="Grigoriev I."/>
            <person name="Lou Y."/>
            <person name="Rohksar D."/>
            <person name="Lucas S."/>
            <person name="Huang K."/>
            <person name="Goodstein D.M."/>
            <person name="Hawkins T."/>
            <person name="Plengvidhya V."/>
            <person name="Welker D."/>
            <person name="Hughes J."/>
            <person name="Goh Y."/>
            <person name="Benson A."/>
            <person name="Baldwin K."/>
            <person name="Lee J.-H."/>
            <person name="Diaz-Muniz I."/>
            <person name="Dosti B."/>
            <person name="Smeianov V."/>
            <person name="Wechter W."/>
            <person name="Barabote R."/>
            <person name="Lorca G."/>
            <person name="Altermann E."/>
            <person name="Barrangou R."/>
            <person name="Ganesan B."/>
            <person name="Xie Y."/>
            <person name="Rawsthorne H."/>
            <person name="Tamir D."/>
            <person name="Parker C."/>
            <person name="Breidt F."/>
            <person name="Broadbent J.R."/>
            <person name="Hutkins R."/>
            <person name="O'Sullivan D."/>
            <person name="Steele J."/>
            <person name="Unlu G."/>
            <person name="Saier M.H. Jr."/>
            <person name="Klaenhammer T."/>
            <person name="Richardson P."/>
            <person name="Kozyavkin S."/>
            <person name="Weimer B.C."/>
            <person name="Mills D.A."/>
        </authorList>
    </citation>
    <scope>NUCLEOTIDE SEQUENCE [LARGE SCALE GENOMIC DNA]</scope>
    <source>
        <strain>ATCC 367 / BCRC 12310 / CIP 105137 / JCM 1170 / LMG 11437 / NCIMB 947 / NCTC 947</strain>
    </source>
</reference>
<protein>
    <recommendedName>
        <fullName evidence="1">UvrABC system protein B</fullName>
        <shortName evidence="1">Protein UvrB</shortName>
    </recommendedName>
    <alternativeName>
        <fullName evidence="1">Excinuclease ABC subunit B</fullName>
    </alternativeName>
</protein>
<evidence type="ECO:0000255" key="1">
    <source>
        <dbReference type="HAMAP-Rule" id="MF_00204"/>
    </source>
</evidence>